<organism>
    <name type="scientific">Escherichia coli (strain K12)</name>
    <dbReference type="NCBI Taxonomy" id="83333"/>
    <lineage>
        <taxon>Bacteria</taxon>
        <taxon>Pseudomonadati</taxon>
        <taxon>Pseudomonadota</taxon>
        <taxon>Gammaproteobacteria</taxon>
        <taxon>Enterobacterales</taxon>
        <taxon>Enterobacteriaceae</taxon>
        <taxon>Escherichia</taxon>
    </lineage>
</organism>
<feature type="chain" id="PRO_0000188553" description="Glycogen phosphorylase">
    <location>
        <begin position="1"/>
        <end position="815"/>
    </location>
</feature>
<feature type="modified residue" description="N6-(pyridoxal phosphate)lysine" evidence="1">
    <location>
        <position position="662"/>
    </location>
</feature>
<feature type="sequence conflict" description="In Ref. 1." evidence="2" ref="1">
    <original>SV</original>
    <variation>RL</variation>
    <location>
        <begin position="13"/>
        <end position="14"/>
    </location>
</feature>
<feature type="sequence conflict" description="In Ref. 5; AAA23875." evidence="2" ref="5">
    <original>S</original>
    <variation>P</variation>
    <location>
        <position position="60"/>
    </location>
</feature>
<feature type="sequence conflict" description="In Ref. 5; AAA23875." evidence="2" ref="5">
    <original>IY</original>
    <variation>TH</variation>
    <location>
        <begin position="94"/>
        <end position="95"/>
    </location>
</feature>
<feature type="sequence conflict" description="In Ref. 5; AAA23875." evidence="2" ref="5">
    <original>L</original>
    <variation>W</variation>
    <location>
        <position position="142"/>
    </location>
</feature>
<feature type="sequence conflict" description="In Ref. 1; CAA34807." evidence="2" ref="1">
    <original>Y</original>
    <variation>S</variation>
    <location>
        <position position="175"/>
    </location>
</feature>
<feature type="sequence conflict" description="In Ref. 2; AAA23874." evidence="2" ref="2">
    <location>
        <begin position="182"/>
        <end position="187"/>
    </location>
</feature>
<feature type="sequence conflict" description="In Ref. 1; CAA34807." evidence="2" ref="1">
    <original>R</original>
    <variation>V</variation>
    <location>
        <position position="191"/>
    </location>
</feature>
<feature type="sequence conflict" description="In Ref. 5; AAA23875." evidence="2" ref="5">
    <original>N</original>
    <variation>D</variation>
    <location>
        <position position="248"/>
    </location>
</feature>
<feature type="sequence conflict" description="In Ref. 2; AAA23874/AAA58226." evidence="2" ref="2">
    <original>EL</original>
    <variation>DV</variation>
    <location>
        <begin position="280"/>
        <end position="281"/>
    </location>
</feature>
<feature type="sequence conflict" description="In Ref. 5; AAA23875." evidence="2" ref="5">
    <original>E</original>
    <variation>G</variation>
    <location>
        <position position="280"/>
    </location>
</feature>
<feature type="sequence conflict" description="In Ref. 5; AAA23875." evidence="2" ref="5">
    <original>P</original>
    <variation>S</variation>
    <location>
        <position position="324"/>
    </location>
</feature>
<feature type="sequence conflict" description="In Ref. 5; AAA23875." evidence="2" ref="5">
    <original>I</original>
    <variation>S</variation>
    <location>
        <position position="377"/>
    </location>
</feature>
<feature type="sequence conflict" description="In Ref. 2; AAA23874." evidence="2" ref="2">
    <original>F</original>
    <variation>L</variation>
    <location>
        <position position="450"/>
    </location>
</feature>
<feature type="sequence conflict" description="In Ref. 1; CAA34807." evidence="2" ref="1">
    <original>EH</original>
    <variation>GT</variation>
    <location>
        <begin position="487"/>
        <end position="488"/>
    </location>
</feature>
<feature type="sequence conflict" description="In Ref. 1; CAA34807." evidence="2" ref="1">
    <original>KL</original>
    <variation>NV</variation>
    <location>
        <begin position="520"/>
        <end position="521"/>
    </location>
</feature>
<feature type="sequence conflict" description="In Ref. 2; AAA23874." evidence="2" ref="2">
    <original>S</original>
    <variation>T</variation>
    <location>
        <position position="729"/>
    </location>
</feature>
<keyword id="KW-0021">Allosteric enzyme</keyword>
<keyword id="KW-0119">Carbohydrate metabolism</keyword>
<keyword id="KW-0321">Glycogen metabolism</keyword>
<keyword id="KW-0328">Glycosyltransferase</keyword>
<keyword id="KW-0663">Pyridoxal phosphate</keyword>
<keyword id="KW-1185">Reference proteome</keyword>
<keyword id="KW-0808">Transferase</keyword>
<protein>
    <recommendedName>
        <fullName>Glycogen phosphorylase</fullName>
        <ecNumber>2.4.1.1</ecNumber>
    </recommendedName>
</protein>
<accession>P0AC86</accession>
<accession>P13031</accession>
<accession>Q2M792</accession>
<reference key="1">
    <citation type="journal article" date="1989" name="FEBS Lett.">
        <title>Molecular cloning and sequencing of the glycogen phosphorylase gene from Escherichia coli.</title>
        <authorList>
            <person name="Choi Y.-L."/>
            <person name="Kawamukai M."/>
            <person name="Utsumi R."/>
            <person name="Sakai H."/>
            <person name="Komano T."/>
        </authorList>
    </citation>
    <scope>NUCLEOTIDE SEQUENCE [GENOMIC DNA]</scope>
    <source>
        <strain>K12</strain>
    </source>
</reference>
<reference key="2">
    <citation type="journal article" date="1988" name="J. Biol. Chem.">
        <title>Alpha-glucan phosphorylase from Escherichia coli. Cloning of the gene, and purification and characterization of the protein.</title>
        <authorList>
            <person name="Yu F."/>
            <person name="Jen Y."/>
            <person name="Takeuchi E."/>
            <person name="Inouye M."/>
            <person name="Nakayama H."/>
            <person name="Tagaya M."/>
            <person name="Fukui T."/>
        </authorList>
    </citation>
    <scope>NUCLEOTIDE SEQUENCE [GENOMIC DNA]</scope>
</reference>
<reference key="3">
    <citation type="journal article" date="1997" name="Science">
        <title>The complete genome sequence of Escherichia coli K-12.</title>
        <authorList>
            <person name="Blattner F.R."/>
            <person name="Plunkett G. III"/>
            <person name="Bloch C.A."/>
            <person name="Perna N.T."/>
            <person name="Burland V."/>
            <person name="Riley M."/>
            <person name="Collado-Vides J."/>
            <person name="Glasner J.D."/>
            <person name="Rode C.K."/>
            <person name="Mayhew G.F."/>
            <person name="Gregor J."/>
            <person name="Davis N.W."/>
            <person name="Kirkpatrick H.A."/>
            <person name="Goeden M.A."/>
            <person name="Rose D.J."/>
            <person name="Mau B."/>
            <person name="Shao Y."/>
        </authorList>
    </citation>
    <scope>NUCLEOTIDE SEQUENCE [LARGE SCALE GENOMIC DNA]</scope>
    <source>
        <strain>K12 / MG1655 / ATCC 47076</strain>
    </source>
</reference>
<reference key="4">
    <citation type="journal article" date="2006" name="Mol. Syst. Biol.">
        <title>Highly accurate genome sequences of Escherichia coli K-12 strains MG1655 and W3110.</title>
        <authorList>
            <person name="Hayashi K."/>
            <person name="Morooka N."/>
            <person name="Yamamoto Y."/>
            <person name="Fujita K."/>
            <person name="Isono K."/>
            <person name="Choi S."/>
            <person name="Ohtsubo E."/>
            <person name="Baba T."/>
            <person name="Wanner B.L."/>
            <person name="Mori H."/>
            <person name="Horiuchi T."/>
        </authorList>
    </citation>
    <scope>NUCLEOTIDE SEQUENCE [LARGE SCALE GENOMIC DNA]</scope>
    <source>
        <strain>K12 / W3110 / ATCC 27325 / DSM 5911</strain>
    </source>
</reference>
<reference key="5">
    <citation type="journal article" date="1988" name="Gene">
        <title>Analysis of the Escherichia coli glycogen gene cluster suggests that catabolic enzymes are encoded among the biosynthetic genes.</title>
        <authorList>
            <person name="Romeo T."/>
            <person name="Kumar A."/>
            <person name="Preiss J."/>
        </authorList>
    </citation>
    <scope>NUCLEOTIDE SEQUENCE [GENOMIC DNA] OF 1-383</scope>
    <source>
        <strain>K12</strain>
    </source>
</reference>
<reference key="6">
    <citation type="journal article" date="1989" name="Agric. Biol. Chem.">
        <title>Nucleotide sequence of the glycerol-3-phosphate dehydrogenase gene of Escherichia coli and regulation by the cAMP-CRP complex.</title>
        <authorList>
            <person name="Choi Y.-L."/>
            <person name="Kawase S."/>
            <person name="Kawamukai M."/>
            <person name="Utsumi R."/>
            <person name="Sakai H."/>
            <person name="Komano T."/>
        </authorList>
    </citation>
    <scope>NUCLEOTIDE SEQUENCE [GENOMIC DNA] OF 657-815</scope>
</reference>
<reference key="7">
    <citation type="journal article" date="1986" name="J. Biol. Chem.">
        <title>Biosynthesis of bacterial glycogen. Primary structure of Escherichia coli ADP-glucose:alpha-1,4-glucan, 4-glucosyltransferase as deduced from the nucleotide sequence of the glgA gene.</title>
        <authorList>
            <person name="Kumar A."/>
            <person name="Larsen C.E."/>
            <person name="Preiss J."/>
        </authorList>
    </citation>
    <scope>NUCLEOTIDE SEQUENCE [GENOMIC DNA] OF 1-12</scope>
</reference>
<gene>
    <name type="primary">glgP</name>
    <name type="synonym">glgY</name>
    <name type="ordered locus">b3428</name>
    <name type="ordered locus">JW3391</name>
</gene>
<evidence type="ECO:0000250" key="1"/>
<evidence type="ECO:0000305" key="2"/>
<comment type="function">
    <text>Phosphorylase is an important allosteric enzyme in carbohydrate metabolism. Enzymes from different sources differ in their regulatory mechanisms and in their natural substrates. However, all known phosphorylases share catalytic and structural properties.</text>
</comment>
<comment type="catalytic activity">
    <reaction>
        <text>[(1-&gt;4)-alpha-D-glucosyl](n) + phosphate = [(1-&gt;4)-alpha-D-glucosyl](n-1) + alpha-D-glucose 1-phosphate</text>
        <dbReference type="Rhea" id="RHEA:41732"/>
        <dbReference type="Rhea" id="RHEA-COMP:9584"/>
        <dbReference type="Rhea" id="RHEA-COMP:9586"/>
        <dbReference type="ChEBI" id="CHEBI:15444"/>
        <dbReference type="ChEBI" id="CHEBI:43474"/>
        <dbReference type="ChEBI" id="CHEBI:58601"/>
        <dbReference type="EC" id="2.4.1.1"/>
    </reaction>
</comment>
<comment type="cofactor">
    <cofactor>
        <name>pyridoxal 5'-phosphate</name>
        <dbReference type="ChEBI" id="CHEBI:597326"/>
    </cofactor>
</comment>
<comment type="similarity">
    <text evidence="2">Belongs to the glycogen phosphorylase family.</text>
</comment>
<comment type="sequence caution" evidence="2">
    <conflict type="frameshift">
        <sequence resource="EMBL-CDS" id="CAA34807"/>
    </conflict>
</comment>
<sequence length="815" mass="93173">MNAPFTYSSPTLSVEALKHSIAYKLMFTIGKDPVVANKHEWLNATLFAVRDRLVERWLRSNRAQLSQETRQVYYLSMEFLIGRTLSNAMLSLGIYEDVQGALEAMGLNLEELIDEENDPGLGNGGLGRLAACFLDSLATLGLPGRGYGIRYDYGMFKQNIVNGSQKESPDYWLEYGNPWEFKRHNTRYKVRFGGRIQQEGKKTRWIETEEILGVAYDQIIPGYDTDATNTLRLWSAQASSEINLGKFNQGDYFAAVEDKNHSENVSRVLYPDDSTYSGRELRLRQEYFLVSSTIQDILSRHYQLHKTYDNLADKIAIHLNDTHPVLSIPEMMRLLIDEHQFSWDDAFEVCCQVFSYTNHTLMSEALETWPVDMLGKILPRHLQIIFEINDYFLKTLQEQYPNDTDLLGRASIIDESNGRRVRMAWLAVVVSHKVNGVSELHSNLMVQSLFADFAKIFPGRFTNVTNGVTPRRWLAVANPSLSAVLDEHLGRNWRTDLSLLNELQQHCDFPMVNHAVHQAKLENKKRLAEYIAQQLNVVVNPKALFDVQIKRIHEYKRQLMNVLHVITRYNRIKADPDAKWVPRVNIFGGKAASAYYMAKHIIHLINDVAKVINNDPQIGDKLKVVFIPNYSVSLAQLIIPAADLSEQISLAGTEASGTSNMKFALNGALTIGTLDGANVEMLDHVGADNIFIFGNTAEEVEELRRQGYKPREYYEKDEELHQVLTQIGSGVFSPEDPGRYRDLVDSLINFGDHYQVLADYRSYVDCQDKVDELYELQEEWTAKAMLNIANMGYFSSDRTIKEYADHIWHIDPVRL</sequence>
<dbReference type="EC" id="2.4.1.1"/>
<dbReference type="EMBL" id="X16931">
    <property type="protein sequence ID" value="CAA34807.1"/>
    <property type="status" value="ALT_FRAME"/>
    <property type="molecule type" value="Genomic_DNA"/>
</dbReference>
<dbReference type="EMBL" id="J03966">
    <property type="protein sequence ID" value="AAA23874.1"/>
    <property type="molecule type" value="Genomic_DNA"/>
</dbReference>
<dbReference type="EMBL" id="U18997">
    <property type="protein sequence ID" value="AAA58226.1"/>
    <property type="status" value="ALT_SEQ"/>
    <property type="molecule type" value="Genomic_DNA"/>
</dbReference>
<dbReference type="EMBL" id="U00096">
    <property type="protein sequence ID" value="AAC76453.1"/>
    <property type="molecule type" value="Genomic_DNA"/>
</dbReference>
<dbReference type="EMBL" id="AP009048">
    <property type="protein sequence ID" value="BAE77864.1"/>
    <property type="molecule type" value="Genomic_DNA"/>
</dbReference>
<dbReference type="EMBL" id="M22368">
    <property type="protein sequence ID" value="AAA23875.1"/>
    <property type="molecule type" value="Genomic_DNA"/>
</dbReference>
<dbReference type="EMBL" id="D00425">
    <property type="protein sequence ID" value="BAA00329.1"/>
    <property type="molecule type" value="Genomic_DNA"/>
</dbReference>
<dbReference type="EMBL" id="J02616">
    <property type="protein sequence ID" value="AAA23871.1"/>
    <property type="molecule type" value="Genomic_DNA"/>
</dbReference>
<dbReference type="PIR" id="G65138">
    <property type="entry name" value="PHECGG"/>
</dbReference>
<dbReference type="RefSeq" id="NP_417886.1">
    <property type="nucleotide sequence ID" value="NC_000913.3"/>
</dbReference>
<dbReference type="RefSeq" id="WP_000993449.1">
    <property type="nucleotide sequence ID" value="NZ_STEB01000004.1"/>
</dbReference>
<dbReference type="SMR" id="P0AC86"/>
<dbReference type="BioGRID" id="4261263">
    <property type="interactions" value="32"/>
</dbReference>
<dbReference type="DIP" id="DIP-47899N"/>
<dbReference type="FunCoup" id="P0AC86">
    <property type="interactions" value="646"/>
</dbReference>
<dbReference type="IntAct" id="P0AC86">
    <property type="interactions" value="2"/>
</dbReference>
<dbReference type="STRING" id="511145.b3428"/>
<dbReference type="jPOST" id="P0AC86"/>
<dbReference type="PaxDb" id="511145-b3428"/>
<dbReference type="DNASU" id="947931"/>
<dbReference type="EnsemblBacteria" id="AAC76453">
    <property type="protein sequence ID" value="AAC76453"/>
    <property type="gene ID" value="b3428"/>
</dbReference>
<dbReference type="GeneID" id="93778561"/>
<dbReference type="GeneID" id="947931"/>
<dbReference type="KEGG" id="ecj:JW3391"/>
<dbReference type="KEGG" id="eco:b3428"/>
<dbReference type="KEGG" id="ecoc:C3026_18585"/>
<dbReference type="PATRIC" id="fig|1411691.4.peg.3300"/>
<dbReference type="EchoBASE" id="EB0375"/>
<dbReference type="eggNOG" id="COG0058">
    <property type="taxonomic scope" value="Bacteria"/>
</dbReference>
<dbReference type="HOGENOM" id="CLU_010198_1_1_6"/>
<dbReference type="InParanoid" id="P0AC86"/>
<dbReference type="OMA" id="WLKQANP"/>
<dbReference type="OrthoDB" id="7229284at2"/>
<dbReference type="PhylomeDB" id="P0AC86"/>
<dbReference type="BioCyc" id="EcoCyc:GLYCOPHOSPHORYL-MONOMER"/>
<dbReference type="BioCyc" id="MetaCyc:GLYCOPHOSPHORYL-MONOMER"/>
<dbReference type="PRO" id="PR:P0AC86"/>
<dbReference type="Proteomes" id="UP000000625">
    <property type="component" value="Chromosome"/>
</dbReference>
<dbReference type="GO" id="GO:0005737">
    <property type="term" value="C:cytoplasm"/>
    <property type="evidence" value="ECO:0000318"/>
    <property type="project" value="GO_Central"/>
</dbReference>
<dbReference type="GO" id="GO:0008184">
    <property type="term" value="F:glycogen phosphorylase activity"/>
    <property type="evidence" value="ECO:0000314"/>
    <property type="project" value="EcoCyc"/>
</dbReference>
<dbReference type="GO" id="GO:0042803">
    <property type="term" value="F:protein homodimerization activity"/>
    <property type="evidence" value="ECO:0000314"/>
    <property type="project" value="EcoCyc"/>
</dbReference>
<dbReference type="GO" id="GO:0030170">
    <property type="term" value="F:pyridoxal phosphate binding"/>
    <property type="evidence" value="ECO:0000314"/>
    <property type="project" value="EcoCyc"/>
</dbReference>
<dbReference type="GO" id="GO:0005980">
    <property type="term" value="P:glycogen catabolic process"/>
    <property type="evidence" value="ECO:0000315"/>
    <property type="project" value="EcoCyc"/>
</dbReference>
<dbReference type="CDD" id="cd04300">
    <property type="entry name" value="GT35_Glycogen_Phosphorylase"/>
    <property type="match status" value="1"/>
</dbReference>
<dbReference type="FunFam" id="3.40.50.2000:FF:000003">
    <property type="entry name" value="Alpha-1,4 glucan phosphorylase"/>
    <property type="match status" value="1"/>
</dbReference>
<dbReference type="FunFam" id="3.40.50.2000:FF:000034">
    <property type="entry name" value="Alpha-1,4 glucan phosphorylase"/>
    <property type="match status" value="1"/>
</dbReference>
<dbReference type="Gene3D" id="3.40.50.2000">
    <property type="entry name" value="Glycogen Phosphorylase B"/>
    <property type="match status" value="2"/>
</dbReference>
<dbReference type="InterPro" id="IPR011833">
    <property type="entry name" value="Glycg_phsphrylas"/>
</dbReference>
<dbReference type="InterPro" id="IPR000811">
    <property type="entry name" value="Glyco_trans_35"/>
</dbReference>
<dbReference type="InterPro" id="IPR035090">
    <property type="entry name" value="Pyridoxal_P_attach_site"/>
</dbReference>
<dbReference type="NCBIfam" id="TIGR02093">
    <property type="entry name" value="P_ylase"/>
    <property type="match status" value="1"/>
</dbReference>
<dbReference type="NCBIfam" id="NF011562">
    <property type="entry name" value="PRK14986.1"/>
    <property type="match status" value="1"/>
</dbReference>
<dbReference type="PANTHER" id="PTHR11468">
    <property type="entry name" value="GLYCOGEN PHOSPHORYLASE"/>
    <property type="match status" value="1"/>
</dbReference>
<dbReference type="PANTHER" id="PTHR11468:SF3">
    <property type="entry name" value="GLYCOGEN PHOSPHORYLASE, LIVER FORM"/>
    <property type="match status" value="1"/>
</dbReference>
<dbReference type="Pfam" id="PF00343">
    <property type="entry name" value="Phosphorylase"/>
    <property type="match status" value="1"/>
</dbReference>
<dbReference type="PIRSF" id="PIRSF000460">
    <property type="entry name" value="Pprylas_GlgP"/>
    <property type="match status" value="1"/>
</dbReference>
<dbReference type="SUPFAM" id="SSF53756">
    <property type="entry name" value="UDP-Glycosyltransferase/glycogen phosphorylase"/>
    <property type="match status" value="1"/>
</dbReference>
<dbReference type="PROSITE" id="PS00102">
    <property type="entry name" value="PHOSPHORYLASE"/>
    <property type="match status" value="1"/>
</dbReference>
<proteinExistence type="inferred from homology"/>
<name>PHSG_ECOLI</name>